<evidence type="ECO:0000250" key="1">
    <source>
        <dbReference type="UniProtKB" id="P04798"/>
    </source>
</evidence>
<evidence type="ECO:0000255" key="2"/>
<evidence type="ECO:0000255" key="3">
    <source>
        <dbReference type="PROSITE-ProRule" id="PRU00498"/>
    </source>
</evidence>
<evidence type="ECO:0000269" key="4">
    <source>
    </source>
</evidence>
<evidence type="ECO:0000303" key="5">
    <source>
    </source>
</evidence>
<evidence type="ECO:0000305" key="6"/>
<evidence type="ECO:0000305" key="7">
    <source>
    </source>
</evidence>
<evidence type="ECO:0000305" key="8">
    <source ref="2"/>
</evidence>
<comment type="function">
    <text evidence="4 7 8">Non-reducing polyketide synthase; part of the gene cluster that mediates the biosynthesis of orcinol depsidone grayanic acid (GRA), the only major secondary metabolite known in C.grayi (PubMed:21289108). The first step consists in the ring and depside synthesis by PKS16 leading to 4-O-demethylsphaerophorin, involving different orcinol-like rings, one with acetyl CoA and the other with octanoyl CoA as the starter (Probable). Further depsidone formation by the GRA cluster-specific cytochrome P450 leads to 4-O-demethylgrayanic acid (Probable). Finally, the cluster specific O-methyltransferase probably converts the 4-O-demethylgrayanic acid into grayanic acid (Probable).</text>
</comment>
<comment type="cofactor">
    <cofactor evidence="1">
        <name>heme</name>
        <dbReference type="ChEBI" id="CHEBI:30413"/>
    </cofactor>
</comment>
<comment type="pathway">
    <text evidence="7">Secondary metabolite biosynthesis.</text>
</comment>
<comment type="subcellular location">
    <subcellularLocation>
        <location evidence="2">Membrane</location>
        <topology evidence="2">Single-pass membrane protein</topology>
    </subcellularLocation>
</comment>
<comment type="similarity">
    <text evidence="6">Belongs to the cytochrome P450 family.</text>
</comment>
<keyword id="KW-0325">Glycoprotein</keyword>
<keyword id="KW-0408">Iron</keyword>
<keyword id="KW-0472">Membrane</keyword>
<keyword id="KW-0479">Metal-binding</keyword>
<keyword id="KW-0503">Monooxygenase</keyword>
<keyword id="KW-0560">Oxidoreductase</keyword>
<keyword id="KW-0812">Transmembrane</keyword>
<keyword id="KW-1133">Transmembrane helix</keyword>
<gene>
    <name evidence="5" type="primary">P450</name>
</gene>
<dbReference type="EC" id="1.-.-.-" evidence="7"/>
<dbReference type="EMBL" id="GU930713">
    <property type="protein sequence ID" value="ADM79460.1"/>
    <property type="molecule type" value="Genomic_DNA"/>
</dbReference>
<dbReference type="GlyCosmos" id="E9KMQ3">
    <property type="glycosylation" value="1 site, No reported glycans"/>
</dbReference>
<dbReference type="BioCyc" id="MetaCyc:MONOMER-21840"/>
<dbReference type="GO" id="GO:0016020">
    <property type="term" value="C:membrane"/>
    <property type="evidence" value="ECO:0007669"/>
    <property type="project" value="UniProtKB-SubCell"/>
</dbReference>
<dbReference type="GO" id="GO:0020037">
    <property type="term" value="F:heme binding"/>
    <property type="evidence" value="ECO:0007669"/>
    <property type="project" value="InterPro"/>
</dbReference>
<dbReference type="GO" id="GO:0005506">
    <property type="term" value="F:iron ion binding"/>
    <property type="evidence" value="ECO:0007669"/>
    <property type="project" value="InterPro"/>
</dbReference>
<dbReference type="GO" id="GO:0004497">
    <property type="term" value="F:monooxygenase activity"/>
    <property type="evidence" value="ECO:0007669"/>
    <property type="project" value="UniProtKB-KW"/>
</dbReference>
<dbReference type="GO" id="GO:0016705">
    <property type="term" value="F:oxidoreductase activity, acting on paired donors, with incorporation or reduction of molecular oxygen"/>
    <property type="evidence" value="ECO:0007669"/>
    <property type="project" value="InterPro"/>
</dbReference>
<dbReference type="CDD" id="cd11062">
    <property type="entry name" value="CYP58-like"/>
    <property type="match status" value="1"/>
</dbReference>
<dbReference type="Gene3D" id="1.10.630.10">
    <property type="entry name" value="Cytochrome P450"/>
    <property type="match status" value="1"/>
</dbReference>
<dbReference type="InterPro" id="IPR001128">
    <property type="entry name" value="Cyt_P450"/>
</dbReference>
<dbReference type="InterPro" id="IPR002401">
    <property type="entry name" value="Cyt_P450_E_grp-I"/>
</dbReference>
<dbReference type="InterPro" id="IPR036396">
    <property type="entry name" value="Cyt_P450_sf"/>
</dbReference>
<dbReference type="InterPro" id="IPR050121">
    <property type="entry name" value="Cytochrome_P450_monoxygenase"/>
</dbReference>
<dbReference type="PANTHER" id="PTHR24305">
    <property type="entry name" value="CYTOCHROME P450"/>
    <property type="match status" value="1"/>
</dbReference>
<dbReference type="PANTHER" id="PTHR24305:SF157">
    <property type="entry name" value="N-ACETYLTRYPTOPHAN 6-HYDROXYLASE IVOC-RELATED"/>
    <property type="match status" value="1"/>
</dbReference>
<dbReference type="Pfam" id="PF00067">
    <property type="entry name" value="p450"/>
    <property type="match status" value="2"/>
</dbReference>
<dbReference type="PRINTS" id="PR00463">
    <property type="entry name" value="EP450I"/>
</dbReference>
<dbReference type="PRINTS" id="PR00385">
    <property type="entry name" value="P450"/>
</dbReference>
<dbReference type="SUPFAM" id="SSF48264">
    <property type="entry name" value="Cytochrome P450"/>
    <property type="match status" value="1"/>
</dbReference>
<proteinExistence type="inferred from homology"/>
<protein>
    <recommendedName>
        <fullName evidence="5">Grayanic acid biosynthesis cluster cytochrome P450 monooxygenase</fullName>
        <ecNumber evidence="7">1.-.-.-</ecNumber>
    </recommendedName>
</protein>
<reference key="1">
    <citation type="journal article" date="2011" name="Mycologia">
        <title>Insights from the first putative biosynthetic gene cluster for a lichen depside and depsidone.</title>
        <authorList>
            <person name="Armaleo D."/>
            <person name="Sun X."/>
            <person name="Culberson C."/>
        </authorList>
    </citation>
    <scope>NUCLEOTIDE SEQUENCE [GENOMIC DNA]</scope>
    <scope>FUNCTION</scope>
</reference>
<reference key="2">
    <citation type="journal article" date="1992" name="Exp. Mycol.">
        <title>Induction of a complete secondary-product pathway in a cultured lichen fungus.</title>
        <authorList>
            <person name="Culberson C."/>
            <person name="Armaleo D."/>
        </authorList>
    </citation>
    <scope>FUNCTION</scope>
</reference>
<feature type="chain" id="PRO_0000445367" description="Grayanic acid biosynthesis cluster cytochrome P450 monooxygenase" evidence="2">
    <location>
        <begin position="1"/>
        <end position="570"/>
    </location>
</feature>
<feature type="transmembrane region" description="Helical" evidence="2">
    <location>
        <begin position="9"/>
        <end position="29"/>
    </location>
</feature>
<feature type="binding site" description="axial binding residue" evidence="1">
    <location>
        <position position="510"/>
    </location>
    <ligand>
        <name>heme</name>
        <dbReference type="ChEBI" id="CHEBI:30413"/>
    </ligand>
    <ligandPart>
        <name>Fe</name>
        <dbReference type="ChEBI" id="CHEBI:18248"/>
    </ligandPart>
</feature>
<feature type="glycosylation site" description="N-linked (GlcNAc...) asparagine" evidence="3">
    <location>
        <position position="191"/>
    </location>
</feature>
<accession>E9KMQ3</accession>
<name>GRA2_CLAGR</name>
<organism>
    <name type="scientific">Cladonia grayi</name>
    <name type="common">Gray's cup lichen</name>
    <dbReference type="NCBI Taxonomy" id="27339"/>
    <lineage>
        <taxon>Eukaryota</taxon>
        <taxon>Fungi</taxon>
        <taxon>Dikarya</taxon>
        <taxon>Ascomycota</taxon>
        <taxon>Pezizomycotina</taxon>
        <taxon>Lecanoromycetes</taxon>
        <taxon>OSLEUM clade</taxon>
        <taxon>Lecanoromycetidae</taxon>
        <taxon>Lecanorales</taxon>
        <taxon>Lecanorineae</taxon>
        <taxon>Cladoniaceae</taxon>
        <taxon>Cladonia</taxon>
    </lineage>
</organism>
<sequence>MLGVIQYSILTIFWLPIAAAXLYGAGLAIYRLFLSPLAKFPGPKLAALTRKYESYYEAYQNYEYYWKIKELHKQYGELFTPLTASFXRXGPIVRVNPHELHIDDKDFYYKLNSFQGAWNKDPYTAHQFANPGSIVGTIDHDIHRKRRAAIMPFFSKQKIYALESVIQGMVDKLCYRIEEYGKTGQPVNLRNASKCFAADVVGEYCFAESGGLXDKPDFAIEEMNQQQQGLKAGLRARYLPSWWMPVVRGAPAWIRASIDPAAKHFEVWHRVSDSLFVRLYDARKXGPVGRMEKRKNDEFYEKAGHRTIFHELINSPHLPPEEKGTGRIIQEAGAMVGAGGESTSQVITAFVYCLLANPQVLSRLREELRSVIPNADSPAPTLRQLEALPYLVGPLLXSTYKYVGYLLTLVARLRTGKIARHQRVPRDRPLYFNEWEIPAGVSXHEDNIPMASTDTAQTICSMTPIFLQIDPEVYPNPHAFMPERWLNLDEXQRQRLEHNLVPYSKGTRGCAGLTLANAELYMLIPALVTRFDLELFDSDAWDTEMAVDSHHHSPRPDSKGVKVFVKKSTF</sequence>